<name>GLGB_SACD2</name>
<reference key="1">
    <citation type="journal article" date="2008" name="PLoS Genet.">
        <title>Complete genome sequence of the complex carbohydrate-degrading marine bacterium, Saccharophagus degradans strain 2-40 T.</title>
        <authorList>
            <person name="Weiner R.M."/>
            <person name="Taylor L.E. II"/>
            <person name="Henrissat B."/>
            <person name="Hauser L."/>
            <person name="Land M."/>
            <person name="Coutinho P.M."/>
            <person name="Rancurel C."/>
            <person name="Saunders E.H."/>
            <person name="Longmire A.G."/>
            <person name="Zhang H."/>
            <person name="Bayer E.A."/>
            <person name="Gilbert H.J."/>
            <person name="Larimer F."/>
            <person name="Zhulin I.B."/>
            <person name="Ekborg N.A."/>
            <person name="Lamed R."/>
            <person name="Richardson P.M."/>
            <person name="Borovok I."/>
            <person name="Hutcheson S."/>
        </authorList>
    </citation>
    <scope>NUCLEOTIDE SEQUENCE [LARGE SCALE GENOMIC DNA]</scope>
    <source>
        <strain>2-40 / ATCC 43961 / DSM 17024</strain>
    </source>
</reference>
<gene>
    <name evidence="1" type="primary">glgB</name>
    <name type="ordered locus">Sde_0987</name>
</gene>
<sequence length="729" mass="83408">MLSITPEIIKEIVQGEYHDVFAVLGPHAQKNGYVIRAFFPAAKTLQVKSKLDGSVLAEAVMRNEEGFFEANCNCSEKPSYYFTVGYGDKEFDVEDMYRFGSTIPEGDLYLFGEGTYEQAYRLFGAHPTEVDGVPGCRFTVWAPNAKTVAVVGDFNFWQGRAHVMRKHIPSGIWELFIPYLGEGALYKYEIRNHSGDCLPHKADPYGFAAQKPPEQASVVSVLDRYEWNDAEWFAKANNWTQRDRPISIYEVHLGSWKRVVEEDNRYLSYKELAADLIPYVKSMGFTHIQLMPISEFPFDGSWGYQPVGLYAPTSRFGSPEDFKYFVDCCHQNDLAVLIDWVPGHFPTDSHGLGLFDGTPLYEHADSRQGFHPDWNTYIYNYGRHEVKSFLMANALFWLEQYHIDGLRVDAVASMLYLDYSRKDGEWLPNSYGGRENLEAIDFLRLVNERVYKRFPHAMMVAEESTAWPGVSSPTSCGGLGFGYKWNMGWMNDSLQYISKEPIHRQYHHHDMTFSLHYAFSENFVLPLSHDEVVHGKRSLLGRMPGDAWQQFANLRAYYAFMWTHPGKKLLFMGGEFAQGMEWNHDTSLSWHQLEIDYHSGIQTLVKSLNRLYTDVPALYKEDCMSSGFEWVEADDRHNSIFAFLRKAKDEKPVLVVANFTPVAREGYRVGVNQPGYYRELLNTDSELFGGSNLGNEGGVHSEEIAWHQRPQSVSINIPALAAVVFQLDS</sequence>
<dbReference type="EC" id="2.4.1.18" evidence="1"/>
<dbReference type="EMBL" id="CP000282">
    <property type="protein sequence ID" value="ABD80249.1"/>
    <property type="molecule type" value="Genomic_DNA"/>
</dbReference>
<dbReference type="RefSeq" id="WP_011467469.1">
    <property type="nucleotide sequence ID" value="NC_007912.1"/>
</dbReference>
<dbReference type="SMR" id="Q21M30"/>
<dbReference type="STRING" id="203122.Sde_0987"/>
<dbReference type="CAZy" id="CBM48">
    <property type="family name" value="Carbohydrate-Binding Module Family 48"/>
</dbReference>
<dbReference type="CAZy" id="GH13">
    <property type="family name" value="Glycoside Hydrolase Family 13"/>
</dbReference>
<dbReference type="GeneID" id="98612671"/>
<dbReference type="KEGG" id="sde:Sde_0987"/>
<dbReference type="eggNOG" id="COG0296">
    <property type="taxonomic scope" value="Bacteria"/>
</dbReference>
<dbReference type="HOGENOM" id="CLU_004245_3_2_6"/>
<dbReference type="OrthoDB" id="9800174at2"/>
<dbReference type="UniPathway" id="UPA00164"/>
<dbReference type="Proteomes" id="UP000001947">
    <property type="component" value="Chromosome"/>
</dbReference>
<dbReference type="GO" id="GO:0005829">
    <property type="term" value="C:cytosol"/>
    <property type="evidence" value="ECO:0007669"/>
    <property type="project" value="TreeGrafter"/>
</dbReference>
<dbReference type="GO" id="GO:0003844">
    <property type="term" value="F:1,4-alpha-glucan branching enzyme activity"/>
    <property type="evidence" value="ECO:0007669"/>
    <property type="project" value="UniProtKB-UniRule"/>
</dbReference>
<dbReference type="GO" id="GO:0043169">
    <property type="term" value="F:cation binding"/>
    <property type="evidence" value="ECO:0007669"/>
    <property type="project" value="InterPro"/>
</dbReference>
<dbReference type="GO" id="GO:0004553">
    <property type="term" value="F:hydrolase activity, hydrolyzing O-glycosyl compounds"/>
    <property type="evidence" value="ECO:0007669"/>
    <property type="project" value="InterPro"/>
</dbReference>
<dbReference type="GO" id="GO:0005978">
    <property type="term" value="P:glycogen biosynthetic process"/>
    <property type="evidence" value="ECO:0007669"/>
    <property type="project" value="UniProtKB-UniRule"/>
</dbReference>
<dbReference type="CDD" id="cd11322">
    <property type="entry name" value="AmyAc_Glg_BE"/>
    <property type="match status" value="1"/>
</dbReference>
<dbReference type="CDD" id="cd02855">
    <property type="entry name" value="E_set_GBE_prok_N"/>
    <property type="match status" value="1"/>
</dbReference>
<dbReference type="FunFam" id="2.60.40.10:FF:000169">
    <property type="entry name" value="1,4-alpha-glucan branching enzyme GlgB"/>
    <property type="match status" value="1"/>
</dbReference>
<dbReference type="FunFam" id="2.60.40.1180:FF:000002">
    <property type="entry name" value="1,4-alpha-glucan branching enzyme GlgB"/>
    <property type="match status" value="1"/>
</dbReference>
<dbReference type="FunFam" id="3.20.20.80:FF:000003">
    <property type="entry name" value="1,4-alpha-glucan branching enzyme GlgB"/>
    <property type="match status" value="1"/>
</dbReference>
<dbReference type="Gene3D" id="3.20.20.80">
    <property type="entry name" value="Glycosidases"/>
    <property type="match status" value="1"/>
</dbReference>
<dbReference type="Gene3D" id="2.60.40.1180">
    <property type="entry name" value="Golgi alpha-mannosidase II"/>
    <property type="match status" value="1"/>
</dbReference>
<dbReference type="Gene3D" id="2.60.40.10">
    <property type="entry name" value="Immunoglobulins"/>
    <property type="match status" value="2"/>
</dbReference>
<dbReference type="HAMAP" id="MF_00685">
    <property type="entry name" value="GlgB"/>
    <property type="match status" value="1"/>
</dbReference>
<dbReference type="InterPro" id="IPR006048">
    <property type="entry name" value="A-amylase/branching_C"/>
</dbReference>
<dbReference type="InterPro" id="IPR037439">
    <property type="entry name" value="Branching_enzy"/>
</dbReference>
<dbReference type="InterPro" id="IPR006407">
    <property type="entry name" value="GlgB"/>
</dbReference>
<dbReference type="InterPro" id="IPR054169">
    <property type="entry name" value="GlgB_N"/>
</dbReference>
<dbReference type="InterPro" id="IPR044143">
    <property type="entry name" value="GlgB_N_E_set_prok"/>
</dbReference>
<dbReference type="InterPro" id="IPR006047">
    <property type="entry name" value="Glyco_hydro_13_cat_dom"/>
</dbReference>
<dbReference type="InterPro" id="IPR004193">
    <property type="entry name" value="Glyco_hydro_13_N"/>
</dbReference>
<dbReference type="InterPro" id="IPR013780">
    <property type="entry name" value="Glyco_hydro_b"/>
</dbReference>
<dbReference type="InterPro" id="IPR017853">
    <property type="entry name" value="Glycoside_hydrolase_SF"/>
</dbReference>
<dbReference type="InterPro" id="IPR013783">
    <property type="entry name" value="Ig-like_fold"/>
</dbReference>
<dbReference type="InterPro" id="IPR014756">
    <property type="entry name" value="Ig_E-set"/>
</dbReference>
<dbReference type="NCBIfam" id="TIGR01515">
    <property type="entry name" value="branching_enzym"/>
    <property type="match status" value="1"/>
</dbReference>
<dbReference type="NCBIfam" id="NF003811">
    <property type="entry name" value="PRK05402.1"/>
    <property type="match status" value="1"/>
</dbReference>
<dbReference type="NCBIfam" id="NF008967">
    <property type="entry name" value="PRK12313.1"/>
    <property type="match status" value="1"/>
</dbReference>
<dbReference type="PANTHER" id="PTHR43651">
    <property type="entry name" value="1,4-ALPHA-GLUCAN-BRANCHING ENZYME"/>
    <property type="match status" value="1"/>
</dbReference>
<dbReference type="PANTHER" id="PTHR43651:SF3">
    <property type="entry name" value="1,4-ALPHA-GLUCAN-BRANCHING ENZYME"/>
    <property type="match status" value="1"/>
</dbReference>
<dbReference type="Pfam" id="PF00128">
    <property type="entry name" value="Alpha-amylase"/>
    <property type="match status" value="1"/>
</dbReference>
<dbReference type="Pfam" id="PF02806">
    <property type="entry name" value="Alpha-amylase_C"/>
    <property type="match status" value="1"/>
</dbReference>
<dbReference type="Pfam" id="PF02922">
    <property type="entry name" value="CBM_48"/>
    <property type="match status" value="1"/>
</dbReference>
<dbReference type="Pfam" id="PF22019">
    <property type="entry name" value="GlgB_N"/>
    <property type="match status" value="1"/>
</dbReference>
<dbReference type="PIRSF" id="PIRSF000463">
    <property type="entry name" value="GlgB"/>
    <property type="match status" value="1"/>
</dbReference>
<dbReference type="SMART" id="SM00642">
    <property type="entry name" value="Aamy"/>
    <property type="match status" value="1"/>
</dbReference>
<dbReference type="SUPFAM" id="SSF51445">
    <property type="entry name" value="(Trans)glycosidases"/>
    <property type="match status" value="1"/>
</dbReference>
<dbReference type="SUPFAM" id="SSF81296">
    <property type="entry name" value="E set domains"/>
    <property type="match status" value="2"/>
</dbReference>
<dbReference type="SUPFAM" id="SSF51011">
    <property type="entry name" value="Glycosyl hydrolase domain"/>
    <property type="match status" value="1"/>
</dbReference>
<comment type="function">
    <text evidence="1">Catalyzes the formation of the alpha-1,6-glucosidic linkages in glycogen by scission of a 1,4-alpha-linked oligosaccharide from growing alpha-1,4-glucan chains and the subsequent attachment of the oligosaccharide to the alpha-1,6 position.</text>
</comment>
<comment type="catalytic activity">
    <reaction evidence="1">
        <text>Transfers a segment of a (1-&gt;4)-alpha-D-glucan chain to a primary hydroxy group in a similar glucan chain.</text>
        <dbReference type="EC" id="2.4.1.18"/>
    </reaction>
</comment>
<comment type="pathway">
    <text evidence="1">Glycan biosynthesis; glycogen biosynthesis.</text>
</comment>
<comment type="subunit">
    <text evidence="1">Monomer.</text>
</comment>
<comment type="similarity">
    <text evidence="1">Belongs to the glycosyl hydrolase 13 family. GlgB subfamily.</text>
</comment>
<feature type="chain" id="PRO_0000260695" description="1,4-alpha-glucan branching enzyme GlgB">
    <location>
        <begin position="1"/>
        <end position="729"/>
    </location>
</feature>
<feature type="active site" description="Nucleophile" evidence="1">
    <location>
        <position position="409"/>
    </location>
</feature>
<feature type="active site" description="Proton donor" evidence="1">
    <location>
        <position position="462"/>
    </location>
</feature>
<protein>
    <recommendedName>
        <fullName evidence="1">1,4-alpha-glucan branching enzyme GlgB</fullName>
        <ecNumber evidence="1">2.4.1.18</ecNumber>
    </recommendedName>
    <alternativeName>
        <fullName evidence="1">1,4-alpha-D-glucan:1,4-alpha-D-glucan 6-glucosyl-transferase</fullName>
    </alternativeName>
    <alternativeName>
        <fullName evidence="1">Alpha-(1-&gt;4)-glucan branching enzyme</fullName>
    </alternativeName>
    <alternativeName>
        <fullName evidence="1">Glycogen branching enzyme</fullName>
        <shortName evidence="1">BE</shortName>
    </alternativeName>
</protein>
<organism>
    <name type="scientific">Saccharophagus degradans (strain 2-40 / ATCC 43961 / DSM 17024)</name>
    <dbReference type="NCBI Taxonomy" id="203122"/>
    <lineage>
        <taxon>Bacteria</taxon>
        <taxon>Pseudomonadati</taxon>
        <taxon>Pseudomonadota</taxon>
        <taxon>Gammaproteobacteria</taxon>
        <taxon>Cellvibrionales</taxon>
        <taxon>Cellvibrionaceae</taxon>
        <taxon>Saccharophagus</taxon>
    </lineage>
</organism>
<accession>Q21M30</accession>
<proteinExistence type="inferred from homology"/>
<evidence type="ECO:0000255" key="1">
    <source>
        <dbReference type="HAMAP-Rule" id="MF_00685"/>
    </source>
</evidence>
<keyword id="KW-0119">Carbohydrate metabolism</keyword>
<keyword id="KW-0320">Glycogen biosynthesis</keyword>
<keyword id="KW-0321">Glycogen metabolism</keyword>
<keyword id="KW-0328">Glycosyltransferase</keyword>
<keyword id="KW-1185">Reference proteome</keyword>
<keyword id="KW-0808">Transferase</keyword>